<dbReference type="EC" id="3.1.1.85" evidence="2"/>
<dbReference type="EMBL" id="CU928158">
    <property type="protein sequence ID" value="CAQ90858.1"/>
    <property type="molecule type" value="Genomic_DNA"/>
</dbReference>
<dbReference type="RefSeq" id="WP_001060104.1">
    <property type="nucleotide sequence ID" value="NC_011740.1"/>
</dbReference>
<dbReference type="SMR" id="B7LSB5"/>
<dbReference type="ESTHER" id="ecoli-bioh">
    <property type="family name" value="BioH"/>
</dbReference>
<dbReference type="GeneID" id="75060011"/>
<dbReference type="KEGG" id="efe:EFER_3380"/>
<dbReference type="HOGENOM" id="CLU_020336_12_2_6"/>
<dbReference type="OrthoDB" id="9780744at2"/>
<dbReference type="UniPathway" id="UPA00078"/>
<dbReference type="Proteomes" id="UP000000745">
    <property type="component" value="Chromosome"/>
</dbReference>
<dbReference type="GO" id="GO:0005737">
    <property type="term" value="C:cytoplasm"/>
    <property type="evidence" value="ECO:0007669"/>
    <property type="project" value="UniProtKB-SubCell"/>
</dbReference>
<dbReference type="GO" id="GO:0090499">
    <property type="term" value="F:pimelyl-[acyl-carrier protein] methyl ester esterase activity"/>
    <property type="evidence" value="ECO:0007669"/>
    <property type="project" value="UniProtKB-EC"/>
</dbReference>
<dbReference type="GO" id="GO:0009102">
    <property type="term" value="P:biotin biosynthetic process"/>
    <property type="evidence" value="ECO:0007669"/>
    <property type="project" value="UniProtKB-UniRule"/>
</dbReference>
<dbReference type="FunFam" id="3.40.50.1820:FF:000045">
    <property type="entry name" value="Pimeloyl-[acyl-carrier protein] methyl ester esterase"/>
    <property type="match status" value="1"/>
</dbReference>
<dbReference type="Gene3D" id="3.40.50.1820">
    <property type="entry name" value="alpha/beta hydrolase"/>
    <property type="match status" value="1"/>
</dbReference>
<dbReference type="HAMAP" id="MF_01260">
    <property type="entry name" value="Carboxylester"/>
    <property type="match status" value="1"/>
</dbReference>
<dbReference type="InterPro" id="IPR000073">
    <property type="entry name" value="AB_hydrolase_1"/>
</dbReference>
<dbReference type="InterPro" id="IPR029058">
    <property type="entry name" value="AB_hydrolase_fold"/>
</dbReference>
<dbReference type="InterPro" id="IPR010076">
    <property type="entry name" value="BioH"/>
</dbReference>
<dbReference type="InterPro" id="IPR050228">
    <property type="entry name" value="Carboxylesterase_BioH"/>
</dbReference>
<dbReference type="NCBIfam" id="TIGR01738">
    <property type="entry name" value="bioH"/>
    <property type="match status" value="1"/>
</dbReference>
<dbReference type="NCBIfam" id="NF007674">
    <property type="entry name" value="PRK10349.1"/>
    <property type="match status" value="1"/>
</dbReference>
<dbReference type="PANTHER" id="PTHR43194">
    <property type="entry name" value="HYDROLASE ALPHA/BETA FOLD FAMILY"/>
    <property type="match status" value="1"/>
</dbReference>
<dbReference type="PANTHER" id="PTHR43194:SF5">
    <property type="entry name" value="PIMELOYL-[ACYL-CARRIER PROTEIN] METHYL ESTER ESTERASE"/>
    <property type="match status" value="1"/>
</dbReference>
<dbReference type="Pfam" id="PF00561">
    <property type="entry name" value="Abhydrolase_1"/>
    <property type="match status" value="1"/>
</dbReference>
<dbReference type="SUPFAM" id="SSF53474">
    <property type="entry name" value="alpha/beta-Hydrolases"/>
    <property type="match status" value="1"/>
</dbReference>
<proteinExistence type="inferred from homology"/>
<keyword id="KW-0093">Biotin biosynthesis</keyword>
<keyword id="KW-0963">Cytoplasm</keyword>
<keyword id="KW-0378">Hydrolase</keyword>
<keyword id="KW-0719">Serine esterase</keyword>
<organism>
    <name type="scientific">Escherichia fergusonii (strain ATCC 35469 / DSM 13698 / CCUG 18766 / IAM 14443 / JCM 21226 / LMG 7866 / NBRC 102419 / NCTC 12128 / CDC 0568-73)</name>
    <dbReference type="NCBI Taxonomy" id="585054"/>
    <lineage>
        <taxon>Bacteria</taxon>
        <taxon>Pseudomonadati</taxon>
        <taxon>Pseudomonadota</taxon>
        <taxon>Gammaproteobacteria</taxon>
        <taxon>Enterobacterales</taxon>
        <taxon>Enterobacteriaceae</taxon>
        <taxon>Escherichia</taxon>
    </lineage>
</organism>
<name>BIOH_ESCF3</name>
<reference key="1">
    <citation type="journal article" date="2009" name="PLoS Genet.">
        <title>Organised genome dynamics in the Escherichia coli species results in highly diverse adaptive paths.</title>
        <authorList>
            <person name="Touchon M."/>
            <person name="Hoede C."/>
            <person name="Tenaillon O."/>
            <person name="Barbe V."/>
            <person name="Baeriswyl S."/>
            <person name="Bidet P."/>
            <person name="Bingen E."/>
            <person name="Bonacorsi S."/>
            <person name="Bouchier C."/>
            <person name="Bouvet O."/>
            <person name="Calteau A."/>
            <person name="Chiapello H."/>
            <person name="Clermont O."/>
            <person name="Cruveiller S."/>
            <person name="Danchin A."/>
            <person name="Diard M."/>
            <person name="Dossat C."/>
            <person name="Karoui M.E."/>
            <person name="Frapy E."/>
            <person name="Garry L."/>
            <person name="Ghigo J.M."/>
            <person name="Gilles A.M."/>
            <person name="Johnson J."/>
            <person name="Le Bouguenec C."/>
            <person name="Lescat M."/>
            <person name="Mangenot S."/>
            <person name="Martinez-Jehanne V."/>
            <person name="Matic I."/>
            <person name="Nassif X."/>
            <person name="Oztas S."/>
            <person name="Petit M.A."/>
            <person name="Pichon C."/>
            <person name="Rouy Z."/>
            <person name="Ruf C.S."/>
            <person name="Schneider D."/>
            <person name="Tourret J."/>
            <person name="Vacherie B."/>
            <person name="Vallenet D."/>
            <person name="Medigue C."/>
            <person name="Rocha E.P.C."/>
            <person name="Denamur E."/>
        </authorList>
    </citation>
    <scope>NUCLEOTIDE SEQUENCE [LARGE SCALE GENOMIC DNA]</scope>
    <source>
        <strain>ATCC 35469 / DSM 13698 / BCRC 15582 / CCUG 18766 / IAM 14443 / JCM 21226 / LMG 7866 / NBRC 102419 / NCTC 12128 / CDC 0568-73</strain>
    </source>
</reference>
<protein>
    <recommendedName>
        <fullName evidence="2">Pimeloyl-[acyl-carrier protein] methyl ester esterase</fullName>
        <ecNumber evidence="2">3.1.1.85</ecNumber>
    </recommendedName>
    <alternativeName>
        <fullName evidence="2">Biotin synthesis protein BioH</fullName>
    </alternativeName>
    <alternativeName>
        <fullName evidence="2">Carboxylesterase BioH</fullName>
    </alternativeName>
</protein>
<gene>
    <name evidence="2" type="primary">bioH</name>
    <name type="ordered locus">EFER_3380</name>
</gene>
<evidence type="ECO:0000255" key="1"/>
<evidence type="ECO:0000255" key="2">
    <source>
        <dbReference type="HAMAP-Rule" id="MF_01260"/>
    </source>
</evidence>
<accession>B7LSB5</accession>
<sequence>MNNIWWQTKGQGNVHLVLLHGWGLNAEVWRCIDEELSSHFTLHLVDLPGFGRSRGFGAMSLADMAEVVLRQAPDKAIWLGWSLGGLVASQIALTHPERVQAIVTVASSPCFSARDEWPGIKPDVLAGFQQQLSDDFQRTVERFLALQTMGTETARQDARALKKTVLALPMPKVDVLNGGLEILKTVDLRQPLQNVSMPFLRLYGYLDGLVPRKVVPMLDKLWPHSESYIFAKAAHAPFISHPDEFCHLLVALKQRV</sequence>
<feature type="chain" id="PRO_1000139994" description="Pimeloyl-[acyl-carrier protein] methyl ester esterase">
    <location>
        <begin position="1"/>
        <end position="256"/>
    </location>
</feature>
<feature type="domain" description="AB hydrolase-1" evidence="1">
    <location>
        <begin position="15"/>
        <end position="242"/>
    </location>
</feature>
<feature type="active site" description="Nucleophile" evidence="2">
    <location>
        <position position="82"/>
    </location>
</feature>
<feature type="active site" evidence="2">
    <location>
        <position position="207"/>
    </location>
</feature>
<feature type="active site" evidence="2">
    <location>
        <position position="235"/>
    </location>
</feature>
<feature type="binding site" evidence="2">
    <location>
        <position position="22"/>
    </location>
    <ligand>
        <name>substrate</name>
    </ligand>
</feature>
<feature type="binding site" evidence="2">
    <location>
        <begin position="82"/>
        <end position="83"/>
    </location>
    <ligand>
        <name>substrate</name>
    </ligand>
</feature>
<feature type="binding site" evidence="2">
    <location>
        <begin position="143"/>
        <end position="147"/>
    </location>
    <ligand>
        <name>substrate</name>
    </ligand>
</feature>
<feature type="binding site" evidence="2">
    <location>
        <position position="235"/>
    </location>
    <ligand>
        <name>substrate</name>
    </ligand>
</feature>
<comment type="function">
    <text evidence="2">The physiological role of BioH is to remove the methyl group introduced by BioC when the pimeloyl moiety is complete. It allows to synthesize pimeloyl-ACP via the fatty acid synthetic pathway through the hydrolysis of the ester bonds of pimeloyl-ACP esters.</text>
</comment>
<comment type="catalytic activity">
    <reaction evidence="2">
        <text>6-carboxyhexanoyl-[ACP] methyl ester + H2O = 6-carboxyhexanoyl-[ACP] + methanol + H(+)</text>
        <dbReference type="Rhea" id="RHEA:42700"/>
        <dbReference type="Rhea" id="RHEA-COMP:9955"/>
        <dbReference type="Rhea" id="RHEA-COMP:10186"/>
        <dbReference type="ChEBI" id="CHEBI:15377"/>
        <dbReference type="ChEBI" id="CHEBI:15378"/>
        <dbReference type="ChEBI" id="CHEBI:17790"/>
        <dbReference type="ChEBI" id="CHEBI:78846"/>
        <dbReference type="ChEBI" id="CHEBI:82735"/>
        <dbReference type="EC" id="3.1.1.85"/>
    </reaction>
</comment>
<comment type="pathway">
    <text evidence="2">Cofactor biosynthesis; biotin biosynthesis.</text>
</comment>
<comment type="subunit">
    <text evidence="2">Monomer.</text>
</comment>
<comment type="subcellular location">
    <subcellularLocation>
        <location evidence="2">Cytoplasm</location>
    </subcellularLocation>
</comment>
<comment type="similarity">
    <text evidence="2">Belongs to the AB hydrolase superfamily. Carboxylesterase BioH family.</text>
</comment>